<name>LIP2_STAAN</name>
<sequence length="691" mass="76543">MLRGQEERKYSIRKYSIGVVSVLAATMFVVSSHEAQASEKTPTSNAAAQKETLNQPGEQGNAITSHQMQSGKQLDDMHKENGKSGTVTEGKDTLQSSKHQSTQNSKTIRTQNDNQVKQDSERQGSKQSHQNNATNNTERQNDQVQNTHHAERNGSQSTTSQSNDVDKSQPSIPAQKVLPNHDKAAPTSTTPPSNDKTAPKSTKAQDATTDKHPNQQDTHQPAHQIIDAKQDDTVRQSEQKPQVGDLSKHIDGQNSPEKPTDKNTDNKQLIKDALQAPKTRSTTNAAADAKKVRPLKANQVQPLNKYPVVFVHGFLGLVGDNAPALYPNYWGGNKFKVIEELRKQGYNVHQASVSAFGSNYDRAVELYYYIKGGRVDYGAAHAAKYGHERYGKTYKGIMPNWEPGKKVHLVGHSMGGQTIRLMEEFLRNGNKEEIAYHKAHGGEISPLFTGGHNNMVASITTLATPHNGSQAADKFGNTEAVRKIMFALNRFMGNKYSNIDLGLTQWGFKQLPNESYIDYIKRVSKSKIWTSDDNAAYDLTLDGSAKLNNMTSMNPNITYTTYTGVSSHTGPLGYENPDLGTFFLMDTTSRIIGHDAREEWRKNDGVVPVISSLHPSNQPFINVTNDEPATRRGIWQVKPIIQGWDHVDFIGVDFLDFKRKGAELANFYTGIINDLLRVEATESKGTQLKAS</sequence>
<keyword id="KW-0106">Calcium</keyword>
<keyword id="KW-0378">Hydrolase</keyword>
<keyword id="KW-0442">Lipid degradation</keyword>
<keyword id="KW-0443">Lipid metabolism</keyword>
<keyword id="KW-0479">Metal-binding</keyword>
<keyword id="KW-0964">Secreted</keyword>
<keyword id="KW-0732">Signal</keyword>
<keyword id="KW-0865">Zymogen</keyword>
<accession>Q7A7P2</accession>
<reference key="1">
    <citation type="journal article" date="2001" name="Lancet">
        <title>Whole genome sequencing of meticillin-resistant Staphylococcus aureus.</title>
        <authorList>
            <person name="Kuroda M."/>
            <person name="Ohta T."/>
            <person name="Uchiyama I."/>
            <person name="Baba T."/>
            <person name="Yuzawa H."/>
            <person name="Kobayashi I."/>
            <person name="Cui L."/>
            <person name="Oguchi A."/>
            <person name="Aoki K."/>
            <person name="Nagai Y."/>
            <person name="Lian J.-Q."/>
            <person name="Ito T."/>
            <person name="Kanamori M."/>
            <person name="Matsumaru H."/>
            <person name="Maruyama A."/>
            <person name="Murakami H."/>
            <person name="Hosoyama A."/>
            <person name="Mizutani-Ui Y."/>
            <person name="Takahashi N.K."/>
            <person name="Sawano T."/>
            <person name="Inoue R."/>
            <person name="Kaito C."/>
            <person name="Sekimizu K."/>
            <person name="Hirakawa H."/>
            <person name="Kuhara S."/>
            <person name="Goto S."/>
            <person name="Yabuzaki J."/>
            <person name="Kanehisa M."/>
            <person name="Yamashita A."/>
            <person name="Oshima K."/>
            <person name="Furuya K."/>
            <person name="Yoshino C."/>
            <person name="Shiba T."/>
            <person name="Hattori M."/>
            <person name="Ogasawara N."/>
            <person name="Hayashi H."/>
            <person name="Hiramatsu K."/>
        </authorList>
    </citation>
    <scope>NUCLEOTIDE SEQUENCE [LARGE SCALE GENOMIC DNA]</scope>
    <source>
        <strain>N315</strain>
    </source>
</reference>
<reference key="2">
    <citation type="submission" date="2007-10" db="UniProtKB">
        <title>Shotgun proteomic analysis of total and membrane protein extracts of S. aureus strain N315.</title>
        <authorList>
            <person name="Vaezzadeh A.R."/>
            <person name="Deshusses J."/>
            <person name="Lescuyer P."/>
            <person name="Hochstrasser D.F."/>
        </authorList>
    </citation>
    <scope>IDENTIFICATION BY MASS SPECTROMETRY [LARGE SCALE ANALYSIS]</scope>
    <source>
        <strain>N315</strain>
    </source>
</reference>
<feature type="signal peptide" evidence="2">
    <location>
        <begin position="1"/>
        <end position="37"/>
    </location>
</feature>
<feature type="propeptide" id="PRO_0000045190" evidence="1">
    <location>
        <begin position="38"/>
        <end position="296"/>
    </location>
</feature>
<feature type="chain" id="PRO_0000045191" description="Lipase 2">
    <location>
        <begin position="297"/>
        <end position="691"/>
    </location>
</feature>
<feature type="region of interest" description="Disordered" evidence="4">
    <location>
        <begin position="34"/>
        <end position="267"/>
    </location>
</feature>
<feature type="compositionally biased region" description="Polar residues" evidence="4">
    <location>
        <begin position="34"/>
        <end position="72"/>
    </location>
</feature>
<feature type="compositionally biased region" description="Basic and acidic residues" evidence="4">
    <location>
        <begin position="73"/>
        <end position="82"/>
    </location>
</feature>
<feature type="compositionally biased region" description="Polar residues" evidence="4">
    <location>
        <begin position="83"/>
        <end position="115"/>
    </location>
</feature>
<feature type="compositionally biased region" description="Polar residues" evidence="4">
    <location>
        <begin position="125"/>
        <end position="172"/>
    </location>
</feature>
<feature type="compositionally biased region" description="Polar residues" evidence="4">
    <location>
        <begin position="186"/>
        <end position="207"/>
    </location>
</feature>
<feature type="compositionally biased region" description="Basic and acidic residues" evidence="4">
    <location>
        <begin position="226"/>
        <end position="238"/>
    </location>
</feature>
<feature type="compositionally biased region" description="Basic and acidic residues" evidence="4">
    <location>
        <begin position="258"/>
        <end position="267"/>
    </location>
</feature>
<feature type="active site" description="Nucleophile" evidence="1">
    <location>
        <position position="413"/>
    </location>
</feature>
<feature type="active site" description="Charge relay system" evidence="3">
    <location>
        <position position="604"/>
    </location>
</feature>
<feature type="active site" description="Charge relay system" evidence="3">
    <location>
        <position position="646"/>
    </location>
</feature>
<feature type="binding site" evidence="1">
    <location>
        <position position="580"/>
    </location>
    <ligand>
        <name>Ca(2+)</name>
        <dbReference type="ChEBI" id="CHEBI:29108"/>
    </ligand>
</feature>
<feature type="binding site" evidence="1">
    <location>
        <position position="645"/>
    </location>
    <ligand>
        <name>Ca(2+)</name>
        <dbReference type="ChEBI" id="CHEBI:29108"/>
    </ligand>
</feature>
<feature type="binding site" evidence="1">
    <location>
        <position position="648"/>
    </location>
    <ligand>
        <name>Ca(2+)</name>
        <dbReference type="ChEBI" id="CHEBI:29108"/>
    </ligand>
</feature>
<feature type="binding site" evidence="1">
    <location>
        <position position="653"/>
    </location>
    <ligand>
        <name>Ca(2+)</name>
        <dbReference type="ChEBI" id="CHEBI:29108"/>
    </ligand>
</feature>
<feature type="binding site" evidence="1">
    <location>
        <position position="656"/>
    </location>
    <ligand>
        <name>Ca(2+)</name>
        <dbReference type="ChEBI" id="CHEBI:29108"/>
    </ligand>
</feature>
<organism>
    <name type="scientific">Staphylococcus aureus (strain N315)</name>
    <dbReference type="NCBI Taxonomy" id="158879"/>
    <lineage>
        <taxon>Bacteria</taxon>
        <taxon>Bacillati</taxon>
        <taxon>Bacillota</taxon>
        <taxon>Bacilli</taxon>
        <taxon>Bacillales</taxon>
        <taxon>Staphylococcaceae</taxon>
        <taxon>Staphylococcus</taxon>
    </lineage>
</organism>
<gene>
    <name type="primary">lip2</name>
    <name type="synonym">geh</name>
    <name type="ordered locus">SA0309</name>
</gene>
<comment type="catalytic activity">
    <reaction>
        <text>a triacylglycerol + H2O = a diacylglycerol + a fatty acid + H(+)</text>
        <dbReference type="Rhea" id="RHEA:12044"/>
        <dbReference type="ChEBI" id="CHEBI:15377"/>
        <dbReference type="ChEBI" id="CHEBI:15378"/>
        <dbReference type="ChEBI" id="CHEBI:17855"/>
        <dbReference type="ChEBI" id="CHEBI:18035"/>
        <dbReference type="ChEBI" id="CHEBI:28868"/>
        <dbReference type="EC" id="3.1.1.3"/>
    </reaction>
</comment>
<comment type="subcellular location">
    <subcellularLocation>
        <location evidence="1">Secreted</location>
    </subcellularLocation>
</comment>
<comment type="similarity">
    <text evidence="5">Belongs to the AB hydrolase superfamily. Lipase family.</text>
</comment>
<proteinExistence type="evidence at protein level"/>
<evidence type="ECO:0000250" key="1"/>
<evidence type="ECO:0000255" key="2"/>
<evidence type="ECO:0000255" key="3">
    <source>
        <dbReference type="PROSITE-ProRule" id="PRU10037"/>
    </source>
</evidence>
<evidence type="ECO:0000256" key="4">
    <source>
        <dbReference type="SAM" id="MobiDB-lite"/>
    </source>
</evidence>
<evidence type="ECO:0000305" key="5"/>
<protein>
    <recommendedName>
        <fullName>Lipase 2</fullName>
        <ecNumber>3.1.1.3</ecNumber>
    </recommendedName>
    <alternativeName>
        <fullName>Glycerol ester hydrolase 2</fullName>
    </alternativeName>
</protein>
<dbReference type="EC" id="3.1.1.3"/>
<dbReference type="EMBL" id="BA000018">
    <property type="protein sequence ID" value="BAB41533.1"/>
    <property type="molecule type" value="Genomic_DNA"/>
</dbReference>
<dbReference type="PIR" id="B89797">
    <property type="entry name" value="B89797"/>
</dbReference>
<dbReference type="RefSeq" id="WP_000943819.1">
    <property type="nucleotide sequence ID" value="NC_002745.2"/>
</dbReference>
<dbReference type="SMR" id="Q7A7P2"/>
<dbReference type="ESTHER" id="staau-lipas">
    <property type="family name" value="Bacterial_lip_FamI.6"/>
</dbReference>
<dbReference type="EnsemblBacteria" id="BAB41533">
    <property type="protein sequence ID" value="BAB41533"/>
    <property type="gene ID" value="BAB41533"/>
</dbReference>
<dbReference type="KEGG" id="sau:SA0309"/>
<dbReference type="HOGENOM" id="CLU_023555_2_0_9"/>
<dbReference type="GO" id="GO:0005576">
    <property type="term" value="C:extracellular region"/>
    <property type="evidence" value="ECO:0007669"/>
    <property type="project" value="UniProtKB-SubCell"/>
</dbReference>
<dbReference type="GO" id="GO:0046872">
    <property type="term" value="F:metal ion binding"/>
    <property type="evidence" value="ECO:0007669"/>
    <property type="project" value="UniProtKB-KW"/>
</dbReference>
<dbReference type="GO" id="GO:0004806">
    <property type="term" value="F:triacylglycerol lipase activity"/>
    <property type="evidence" value="ECO:0007669"/>
    <property type="project" value="UniProtKB-EC"/>
</dbReference>
<dbReference type="GO" id="GO:0016042">
    <property type="term" value="P:lipid catabolic process"/>
    <property type="evidence" value="ECO:0007669"/>
    <property type="project" value="UniProtKB-KW"/>
</dbReference>
<dbReference type="Gene3D" id="3.40.50.1820">
    <property type="entry name" value="alpha/beta hydrolase"/>
    <property type="match status" value="1"/>
</dbReference>
<dbReference type="InterPro" id="IPR029058">
    <property type="entry name" value="AB_hydrolase_fold"/>
</dbReference>
<dbReference type="InterPro" id="IPR056304">
    <property type="entry name" value="Lip-like_C"/>
</dbReference>
<dbReference type="InterPro" id="IPR005877">
    <property type="entry name" value="YSIRK_signal_dom"/>
</dbReference>
<dbReference type="NCBIfam" id="NF047351">
    <property type="entry name" value="lipase_YSIRK_Sa"/>
    <property type="match status" value="1"/>
</dbReference>
<dbReference type="NCBIfam" id="TIGR01168">
    <property type="entry name" value="YSIRK_signal"/>
    <property type="match status" value="1"/>
</dbReference>
<dbReference type="PANTHER" id="PTHR34043">
    <property type="entry name" value="ALPHA/BETA-HYDROLASES SUPERFAMILY PROTEIN"/>
    <property type="match status" value="1"/>
</dbReference>
<dbReference type="PANTHER" id="PTHR34043:SF3">
    <property type="entry name" value="ALPHA_BETA-HYDROLASES SUPERFAMILY PROTEIN"/>
    <property type="match status" value="1"/>
</dbReference>
<dbReference type="Pfam" id="PF24708">
    <property type="entry name" value="Lip_C"/>
    <property type="match status" value="1"/>
</dbReference>
<dbReference type="Pfam" id="PF04650">
    <property type="entry name" value="YSIRK_signal"/>
    <property type="match status" value="1"/>
</dbReference>
<dbReference type="SUPFAM" id="SSF53474">
    <property type="entry name" value="alpha/beta-Hydrolases"/>
    <property type="match status" value="1"/>
</dbReference>
<dbReference type="PROSITE" id="PS00120">
    <property type="entry name" value="LIPASE_SER"/>
    <property type="match status" value="1"/>
</dbReference>